<sequence>MSEVTTNEYNEDGKLIRKIRSFVRREGRLTKGQENAMNECWPTMGIDYKAELLDWKEVFGNDNPVVLEIGFGMGASLVEMAKNAPEKNFFGIEVHSPGVGACLSDAREAGITNLRVMCHDAVEVFEHMIPNDSLATLQLFFPDPWHKKRHHKRRIVQLEFAEMVRQKLIPNEGIFHMATDWENYAEHMIEIMNQAPGFENIAQDGDFVPRPEDRPLTKFEARGHRLGHGVWDIKYKRIA</sequence>
<feature type="chain" id="PRO_0000171419" description="tRNA (guanine-N(7)-)-methyltransferase">
    <location>
        <begin position="1"/>
        <end position="239"/>
    </location>
</feature>
<feature type="active site" evidence="1">
    <location>
        <position position="143"/>
    </location>
</feature>
<feature type="binding site" evidence="2">
    <location>
        <position position="68"/>
    </location>
    <ligand>
        <name>S-adenosyl-L-methionine</name>
        <dbReference type="ChEBI" id="CHEBI:59789"/>
    </ligand>
</feature>
<feature type="binding site" evidence="2">
    <location>
        <position position="93"/>
    </location>
    <ligand>
        <name>S-adenosyl-L-methionine</name>
        <dbReference type="ChEBI" id="CHEBI:59789"/>
    </ligand>
</feature>
<feature type="binding site" evidence="2">
    <location>
        <position position="120"/>
    </location>
    <ligand>
        <name>S-adenosyl-L-methionine</name>
        <dbReference type="ChEBI" id="CHEBI:59789"/>
    </ligand>
</feature>
<feature type="binding site" evidence="2">
    <location>
        <position position="143"/>
    </location>
    <ligand>
        <name>S-adenosyl-L-methionine</name>
        <dbReference type="ChEBI" id="CHEBI:59789"/>
    </ligand>
</feature>
<feature type="binding site" evidence="2">
    <location>
        <position position="147"/>
    </location>
    <ligand>
        <name>substrate</name>
    </ligand>
</feature>
<feature type="binding site" evidence="2">
    <location>
        <position position="180"/>
    </location>
    <ligand>
        <name>substrate</name>
    </ligand>
</feature>
<feature type="binding site" evidence="2">
    <location>
        <begin position="217"/>
        <end position="220"/>
    </location>
    <ligand>
        <name>substrate</name>
    </ligand>
</feature>
<reference key="1">
    <citation type="journal article" date="2003" name="Lancet">
        <title>Genome sequence of Vibrio parahaemolyticus: a pathogenic mechanism distinct from that of V. cholerae.</title>
        <authorList>
            <person name="Makino K."/>
            <person name="Oshima K."/>
            <person name="Kurokawa K."/>
            <person name="Yokoyama K."/>
            <person name="Uda T."/>
            <person name="Tagomori K."/>
            <person name="Iijima Y."/>
            <person name="Najima M."/>
            <person name="Nakano M."/>
            <person name="Yamashita A."/>
            <person name="Kubota Y."/>
            <person name="Kimura S."/>
            <person name="Yasunaga T."/>
            <person name="Honda T."/>
            <person name="Shinagawa H."/>
            <person name="Hattori M."/>
            <person name="Iida T."/>
        </authorList>
    </citation>
    <scope>NUCLEOTIDE SEQUENCE [LARGE SCALE GENOMIC DNA]</scope>
    <source>
        <strain>RIMD 2210633</strain>
    </source>
</reference>
<organism>
    <name type="scientific">Vibrio parahaemolyticus serotype O3:K6 (strain RIMD 2210633)</name>
    <dbReference type="NCBI Taxonomy" id="223926"/>
    <lineage>
        <taxon>Bacteria</taxon>
        <taxon>Pseudomonadati</taxon>
        <taxon>Pseudomonadota</taxon>
        <taxon>Gammaproteobacteria</taxon>
        <taxon>Vibrionales</taxon>
        <taxon>Vibrionaceae</taxon>
        <taxon>Vibrio</taxon>
    </lineage>
</organism>
<gene>
    <name evidence="2" type="primary">trmB</name>
    <name type="ordered locus">VP2625</name>
</gene>
<protein>
    <recommendedName>
        <fullName evidence="2">tRNA (guanine-N(7)-)-methyltransferase</fullName>
        <ecNumber evidence="2">2.1.1.33</ecNumber>
    </recommendedName>
    <alternativeName>
        <fullName evidence="2">tRNA (guanine(46)-N(7))-methyltransferase</fullName>
    </alternativeName>
    <alternativeName>
        <fullName evidence="2">tRNA(m7G46)-methyltransferase</fullName>
    </alternativeName>
</protein>
<name>TRMB_VIBPA</name>
<dbReference type="EC" id="2.1.1.33" evidence="2"/>
<dbReference type="EMBL" id="BA000031">
    <property type="protein sequence ID" value="BAC60888.1"/>
    <property type="molecule type" value="Genomic_DNA"/>
</dbReference>
<dbReference type="RefSeq" id="NP_799004.1">
    <property type="nucleotide sequence ID" value="NC_004603.1"/>
</dbReference>
<dbReference type="RefSeq" id="WP_005482471.1">
    <property type="nucleotide sequence ID" value="NC_004603.1"/>
</dbReference>
<dbReference type="SMR" id="Q87LI7"/>
<dbReference type="GeneID" id="1190149"/>
<dbReference type="KEGG" id="vpa:VP2625"/>
<dbReference type="PATRIC" id="fig|223926.6.peg.2521"/>
<dbReference type="eggNOG" id="COG0220">
    <property type="taxonomic scope" value="Bacteria"/>
</dbReference>
<dbReference type="HOGENOM" id="CLU_050910_0_1_6"/>
<dbReference type="UniPathway" id="UPA00989"/>
<dbReference type="Proteomes" id="UP000002493">
    <property type="component" value="Chromosome 1"/>
</dbReference>
<dbReference type="GO" id="GO:0043527">
    <property type="term" value="C:tRNA methyltransferase complex"/>
    <property type="evidence" value="ECO:0007669"/>
    <property type="project" value="TreeGrafter"/>
</dbReference>
<dbReference type="GO" id="GO:0008176">
    <property type="term" value="F:tRNA (guanine(46)-N7)-methyltransferase activity"/>
    <property type="evidence" value="ECO:0007669"/>
    <property type="project" value="UniProtKB-UniRule"/>
</dbReference>
<dbReference type="FunFam" id="3.40.50.150:FF:000024">
    <property type="entry name" value="tRNA (guanine-N(7)-)-methyltransferase"/>
    <property type="match status" value="1"/>
</dbReference>
<dbReference type="Gene3D" id="3.40.50.150">
    <property type="entry name" value="Vaccinia Virus protein VP39"/>
    <property type="match status" value="1"/>
</dbReference>
<dbReference type="HAMAP" id="MF_01057">
    <property type="entry name" value="tRNA_methyltr_TrmB"/>
    <property type="match status" value="1"/>
</dbReference>
<dbReference type="InterPro" id="IPR029063">
    <property type="entry name" value="SAM-dependent_MTases_sf"/>
</dbReference>
<dbReference type="InterPro" id="IPR003358">
    <property type="entry name" value="tRNA_(Gua-N-7)_MeTrfase_Trmb"/>
</dbReference>
<dbReference type="InterPro" id="IPR055361">
    <property type="entry name" value="tRNA_methyltr_TrmB_bact"/>
</dbReference>
<dbReference type="NCBIfam" id="TIGR00091">
    <property type="entry name" value="tRNA (guanosine(46)-N7)-methyltransferase TrmB"/>
    <property type="match status" value="1"/>
</dbReference>
<dbReference type="PANTHER" id="PTHR23417">
    <property type="entry name" value="3-DEOXY-D-MANNO-OCTULOSONIC-ACID TRANSFERASE/TRNA GUANINE-N 7 - -METHYLTRANSFERASE"/>
    <property type="match status" value="1"/>
</dbReference>
<dbReference type="PANTHER" id="PTHR23417:SF14">
    <property type="entry name" value="PENTACOTRIPEPTIDE-REPEAT REGION OF PRORP DOMAIN-CONTAINING PROTEIN"/>
    <property type="match status" value="1"/>
</dbReference>
<dbReference type="Pfam" id="PF02390">
    <property type="entry name" value="Methyltransf_4"/>
    <property type="match status" value="1"/>
</dbReference>
<dbReference type="SUPFAM" id="SSF53335">
    <property type="entry name" value="S-adenosyl-L-methionine-dependent methyltransferases"/>
    <property type="match status" value="1"/>
</dbReference>
<dbReference type="PROSITE" id="PS51625">
    <property type="entry name" value="SAM_MT_TRMB"/>
    <property type="match status" value="1"/>
</dbReference>
<evidence type="ECO:0000250" key="1"/>
<evidence type="ECO:0000255" key="2">
    <source>
        <dbReference type="HAMAP-Rule" id="MF_01057"/>
    </source>
</evidence>
<comment type="function">
    <text evidence="2">Catalyzes the formation of N(7)-methylguanine at position 46 (m7G46) in tRNA.</text>
</comment>
<comment type="catalytic activity">
    <reaction evidence="2">
        <text>guanosine(46) in tRNA + S-adenosyl-L-methionine = N(7)-methylguanosine(46) in tRNA + S-adenosyl-L-homocysteine</text>
        <dbReference type="Rhea" id="RHEA:42708"/>
        <dbReference type="Rhea" id="RHEA-COMP:10188"/>
        <dbReference type="Rhea" id="RHEA-COMP:10189"/>
        <dbReference type="ChEBI" id="CHEBI:57856"/>
        <dbReference type="ChEBI" id="CHEBI:59789"/>
        <dbReference type="ChEBI" id="CHEBI:74269"/>
        <dbReference type="ChEBI" id="CHEBI:74480"/>
        <dbReference type="EC" id="2.1.1.33"/>
    </reaction>
</comment>
<comment type="pathway">
    <text evidence="2">tRNA modification; N(7)-methylguanine-tRNA biosynthesis.</text>
</comment>
<comment type="similarity">
    <text evidence="2">Belongs to the class I-like SAM-binding methyltransferase superfamily. TrmB family.</text>
</comment>
<proteinExistence type="inferred from homology"/>
<keyword id="KW-0489">Methyltransferase</keyword>
<keyword id="KW-0949">S-adenosyl-L-methionine</keyword>
<keyword id="KW-0808">Transferase</keyword>
<keyword id="KW-0819">tRNA processing</keyword>
<accession>Q87LI7</accession>